<comment type="function">
    <text>Probable thiol-disulfide oxidoreductase that may participate in various redox reactions.</text>
</comment>
<comment type="subcellular location">
    <subcellularLocation>
        <location evidence="3">Plastid</location>
        <location evidence="3">Chloroplast stroma</location>
    </subcellularLocation>
</comment>
<comment type="alternative products">
    <event type="alternative splicing"/>
    <isoform>
        <id>Q9FG36-1</id>
        <name>1</name>
        <sequence type="displayed"/>
    </isoform>
    <text>A number of isoforms are produced. According to EST sequences.</text>
</comment>
<comment type="similarity">
    <text evidence="4">Belongs to the thioredoxin family.</text>
</comment>
<comment type="sequence caution" evidence="4">
    <conflict type="erroneous initiation">
        <sequence resource="EMBL-CDS" id="AAD35009"/>
    </conflict>
    <text>Truncated N-terminus.</text>
</comment>
<comment type="sequence caution" evidence="4">
    <conflict type="erroneous gene model prediction">
        <sequence resource="EMBL-CDS" id="BAB09803"/>
    </conflict>
</comment>
<dbReference type="EMBL" id="AP002032">
    <property type="protein sequence ID" value="BAB09803.1"/>
    <property type="status" value="ALT_SEQ"/>
    <property type="molecule type" value="Genomic_DNA"/>
</dbReference>
<dbReference type="EMBL" id="CP002688">
    <property type="protein sequence ID" value="AED91050.1"/>
    <property type="molecule type" value="Genomic_DNA"/>
</dbReference>
<dbReference type="EMBL" id="BT029447">
    <property type="protein sequence ID" value="ABK59676.1"/>
    <property type="molecule type" value="mRNA"/>
</dbReference>
<dbReference type="EMBL" id="AF144391">
    <property type="protein sequence ID" value="AAD35009.1"/>
    <property type="status" value="ALT_INIT"/>
    <property type="molecule type" value="mRNA"/>
</dbReference>
<dbReference type="EMBL" id="AF144393">
    <property type="protein sequence ID" value="AAD37584.1"/>
    <property type="molecule type" value="Genomic_DNA"/>
</dbReference>
<dbReference type="EMBL" id="AK317080">
    <property type="protein sequence ID" value="BAH19772.1"/>
    <property type="molecule type" value="mRNA"/>
</dbReference>
<dbReference type="RefSeq" id="NP_568172.1">
    <molecule id="Q9FG36-1"/>
    <property type="nucleotide sequence ID" value="NM_120752.4"/>
</dbReference>
<dbReference type="SMR" id="Q9FG36"/>
<dbReference type="BioGRID" id="15837">
    <property type="interactions" value="1"/>
</dbReference>
<dbReference type="FunCoup" id="Q9FG36">
    <property type="interactions" value="1035"/>
</dbReference>
<dbReference type="STRING" id="3702.Q9FG36"/>
<dbReference type="iPTMnet" id="Q9FG36"/>
<dbReference type="PaxDb" id="3702-AT5G06690.2"/>
<dbReference type="ProteomicsDB" id="246382">
    <molecule id="Q9FG36-1"/>
</dbReference>
<dbReference type="EnsemblPlants" id="AT5G06690.1">
    <molecule id="Q9FG36-1"/>
    <property type="protein sequence ID" value="AT5G06690.1"/>
    <property type="gene ID" value="AT5G06690"/>
</dbReference>
<dbReference type="GeneID" id="830558"/>
<dbReference type="Gramene" id="AT5G06690.1">
    <molecule id="Q9FG36-1"/>
    <property type="protein sequence ID" value="AT5G06690.1"/>
    <property type="gene ID" value="AT5G06690"/>
</dbReference>
<dbReference type="KEGG" id="ath:AT5G06690"/>
<dbReference type="Araport" id="AT5G06690"/>
<dbReference type="TAIR" id="AT5G06690">
    <property type="gene designation" value="WCRKC1"/>
</dbReference>
<dbReference type="eggNOG" id="KOG0907">
    <property type="taxonomic scope" value="Eukaryota"/>
</dbReference>
<dbReference type="HOGENOM" id="CLU_090389_3_0_1"/>
<dbReference type="InParanoid" id="Q9FG36"/>
<dbReference type="PhylomeDB" id="Q9FG36"/>
<dbReference type="PRO" id="PR:Q9FG36"/>
<dbReference type="Proteomes" id="UP000006548">
    <property type="component" value="Chromosome 5"/>
</dbReference>
<dbReference type="ExpressionAtlas" id="Q9FG36">
    <property type="expression patterns" value="baseline and differential"/>
</dbReference>
<dbReference type="GO" id="GO:0009570">
    <property type="term" value="C:chloroplast stroma"/>
    <property type="evidence" value="ECO:0007669"/>
    <property type="project" value="UniProtKB-SubCell"/>
</dbReference>
<dbReference type="CDD" id="cd02947">
    <property type="entry name" value="TRX_family"/>
    <property type="match status" value="1"/>
</dbReference>
<dbReference type="FunFam" id="3.40.30.10:FF:000245">
    <property type="entry name" value="Thioredoxin"/>
    <property type="match status" value="1"/>
</dbReference>
<dbReference type="Gene3D" id="3.40.30.10">
    <property type="entry name" value="Glutaredoxin"/>
    <property type="match status" value="1"/>
</dbReference>
<dbReference type="InterPro" id="IPR036249">
    <property type="entry name" value="Thioredoxin-like_sf"/>
</dbReference>
<dbReference type="InterPro" id="IPR013766">
    <property type="entry name" value="Thioredoxin_domain"/>
</dbReference>
<dbReference type="InterPro" id="IPR044253">
    <property type="entry name" value="WCRKC1/2"/>
</dbReference>
<dbReference type="PANTHER" id="PTHR47192:SF3">
    <property type="entry name" value="THIOREDOXIN-LIKE 3-1, CHLOROPLASTIC"/>
    <property type="match status" value="1"/>
</dbReference>
<dbReference type="PANTHER" id="PTHR47192">
    <property type="entry name" value="THIOREDOXIN-LIKE 3-2, CHLOROPLASTIC"/>
    <property type="match status" value="1"/>
</dbReference>
<dbReference type="Pfam" id="PF00085">
    <property type="entry name" value="Thioredoxin"/>
    <property type="match status" value="1"/>
</dbReference>
<dbReference type="SUPFAM" id="SSF52833">
    <property type="entry name" value="Thioredoxin-like"/>
    <property type="match status" value="1"/>
</dbReference>
<dbReference type="PROSITE" id="PS51352">
    <property type="entry name" value="THIOREDOXIN_2"/>
    <property type="match status" value="1"/>
</dbReference>
<keyword id="KW-0025">Alternative splicing</keyword>
<keyword id="KW-0150">Chloroplast</keyword>
<keyword id="KW-1015">Disulfide bond</keyword>
<keyword id="KW-0249">Electron transport</keyword>
<keyword id="KW-0934">Plastid</keyword>
<keyword id="KW-0676">Redox-active center</keyword>
<keyword id="KW-1185">Reference proteome</keyword>
<keyword id="KW-0809">Transit peptide</keyword>
<keyword id="KW-0813">Transport</keyword>
<protein>
    <recommendedName>
        <fullName>Thioredoxin-like 3-1, chloroplastic</fullName>
    </recommendedName>
    <alternativeName>
        <fullName>Thioredoxin WCRKC-1</fullName>
    </alternativeName>
</protein>
<accession>Q9FG36</accession>
<accession>A0JQ77</accession>
<accession>B9DGA5</accession>
<accession>Q9SWQ2</accession>
<accession>Q9XFI2</accession>
<organism>
    <name type="scientific">Arabidopsis thaliana</name>
    <name type="common">Mouse-ear cress</name>
    <dbReference type="NCBI Taxonomy" id="3702"/>
    <lineage>
        <taxon>Eukaryota</taxon>
        <taxon>Viridiplantae</taxon>
        <taxon>Streptophyta</taxon>
        <taxon>Embryophyta</taxon>
        <taxon>Tracheophyta</taxon>
        <taxon>Spermatophyta</taxon>
        <taxon>Magnoliopsida</taxon>
        <taxon>eudicotyledons</taxon>
        <taxon>Gunneridae</taxon>
        <taxon>Pentapetalae</taxon>
        <taxon>rosids</taxon>
        <taxon>malvids</taxon>
        <taxon>Brassicales</taxon>
        <taxon>Brassicaceae</taxon>
        <taxon>Camelineae</taxon>
        <taxon>Arabidopsis</taxon>
    </lineage>
</organism>
<feature type="transit peptide" description="Chloroplast" evidence="1">
    <location>
        <begin position="1"/>
        <end status="unknown"/>
    </location>
</feature>
<feature type="chain" id="PRO_0000034169" description="Thioredoxin-like 3-1, chloroplastic">
    <location>
        <begin status="unknown"/>
        <end position="210"/>
    </location>
</feature>
<feature type="domain" description="Thioredoxin" evidence="2">
    <location>
        <begin position="81"/>
        <end position="210"/>
    </location>
</feature>
<feature type="active site" description="Nucleophile" evidence="1">
    <location>
        <position position="130"/>
    </location>
</feature>
<feature type="active site" description="Nucleophile" evidence="1">
    <location>
        <position position="133"/>
    </location>
</feature>
<feature type="disulfide bond" description="Redox-active" evidence="2">
    <location>
        <begin position="130"/>
        <end position="133"/>
    </location>
</feature>
<feature type="sequence conflict" description="In Ref. 4; AAD35009/AAD37584." evidence="4" ref="4">
    <original>L</original>
    <variation>V</variation>
    <location>
        <position position="117"/>
    </location>
</feature>
<feature type="sequence conflict" description="In Ref. 4; AAD37584." evidence="4" ref="4">
    <original>I</original>
    <variation>F</variation>
    <location>
        <position position="190"/>
    </location>
</feature>
<name>TRL31_ARATH</name>
<gene>
    <name type="primary">WCRKC1</name>
    <name type="ordered locus">At5g06690</name>
    <name type="ORF">MPH15.4</name>
</gene>
<proteinExistence type="evidence at transcript level"/>
<sequence>MAFENLKISRHISSSTKNLLKAKKIMAALASNPQMLTRQAHGNKKEQLWRKESLNLEKKCGFCVSVYSNEKLGRSHMEKEWRLKAFWSNIAQPTTLEMEPINNVEELDAVLSHARQLSQPIIIEWMASWCRKCIYLKPKLEKLAAEYNNRAKFYYVDVNKVPQTLVKRGNISKMPTIQLWKEDEMKEEVIGGHKGWLVIEEVRELINKFV</sequence>
<evidence type="ECO:0000255" key="1"/>
<evidence type="ECO:0000255" key="2">
    <source>
        <dbReference type="PROSITE-ProRule" id="PRU00691"/>
    </source>
</evidence>
<evidence type="ECO:0000269" key="3">
    <source>
    </source>
</evidence>
<evidence type="ECO:0000305" key="4"/>
<reference key="1">
    <citation type="submission" date="2000-05" db="EMBL/GenBank/DDBJ databases">
        <title>Structural analysis of Arabidopsis thaliana chromosome 5. XI.</title>
        <authorList>
            <person name="Kaneko T."/>
            <person name="Katoh T."/>
            <person name="Asamizu E."/>
            <person name="Sato S."/>
            <person name="Nakamura Y."/>
            <person name="Kotani H."/>
            <person name="Tabata S."/>
        </authorList>
    </citation>
    <scope>NUCLEOTIDE SEQUENCE [LARGE SCALE GENOMIC DNA]</scope>
    <source>
        <strain>cv. Columbia</strain>
    </source>
</reference>
<reference key="2">
    <citation type="journal article" date="2017" name="Plant J.">
        <title>Araport11: a complete reannotation of the Arabidopsis thaliana reference genome.</title>
        <authorList>
            <person name="Cheng C.Y."/>
            <person name="Krishnakumar V."/>
            <person name="Chan A.P."/>
            <person name="Thibaud-Nissen F."/>
            <person name="Schobel S."/>
            <person name="Town C.D."/>
        </authorList>
    </citation>
    <scope>GENOME REANNOTATION</scope>
    <source>
        <strain>cv. Columbia</strain>
    </source>
</reference>
<reference key="3">
    <citation type="submission" date="2006-11" db="EMBL/GenBank/DDBJ databases">
        <title>Arabidopsis ORF Clones.</title>
        <authorList>
            <person name="Bautista V.R."/>
            <person name="Kim C.J."/>
            <person name="Chen H."/>
            <person name="Quinitio C."/>
            <person name="Ecker J.R."/>
        </authorList>
    </citation>
    <scope>NUCLEOTIDE SEQUENCE [LARGE SCALE MRNA]</scope>
    <source>
        <strain>cv. Columbia</strain>
    </source>
</reference>
<reference key="4">
    <citation type="journal article" date="1999" name="Trends Plant Sci.">
        <title>Plant thioredoxins and glutaredoxins: identity and putative roles.</title>
        <authorList>
            <person name="Meyer Y."/>
            <person name="Verdoucq L."/>
            <person name="Vignols F."/>
        </authorList>
    </citation>
    <scope>NUCLEOTIDE SEQUENCE [MRNA] OF 4-210</scope>
    <scope>NUCLEOTIDE SEQUENCE [GENOMIC DNA] OF 87-202</scope>
</reference>
<reference key="5">
    <citation type="journal article" date="2009" name="DNA Res.">
        <title>Analysis of multiple occurrences of alternative splicing events in Arabidopsis thaliana using novel sequenced full-length cDNAs.</title>
        <authorList>
            <person name="Iida K."/>
            <person name="Fukami-Kobayashi K."/>
            <person name="Toyoda A."/>
            <person name="Sakaki Y."/>
            <person name="Kobayashi M."/>
            <person name="Seki M."/>
            <person name="Shinozaki K."/>
        </authorList>
    </citation>
    <scope>NUCLEOTIDE SEQUENCE [LARGE SCALE MRNA] OF 42-210</scope>
    <source>
        <strain>cv. Columbia</strain>
    </source>
</reference>
<reference key="6">
    <citation type="journal article" date="2009" name="Mol. Plant">
        <title>Comparative genomic study of the thioredoxin family in photosynthetic organisms with emphasis on Populus trichocarpa.</title>
        <authorList>
            <person name="Chibani K."/>
            <person name="Wingsle G."/>
            <person name="Jacquot J.P."/>
            <person name="Gelhaye E."/>
            <person name="Rouhier N."/>
        </authorList>
    </citation>
    <scope>GENE FAMILY</scope>
    <scope>NOMENCLATURE</scope>
</reference>
<reference key="7">
    <citation type="journal article" date="2009" name="Plant Mol. Biol.">
        <title>A novel extended family of stromal thioredoxins.</title>
        <authorList>
            <person name="Cain P."/>
            <person name="Hall M."/>
            <person name="Schroder W.P."/>
            <person name="Kieselbach T."/>
            <person name="Robinson C."/>
        </authorList>
    </citation>
    <scope>SUBCELLULAR LOCATION</scope>
</reference>